<reference key="1">
    <citation type="submission" date="2007-04" db="EMBL/GenBank/DDBJ databases">
        <authorList>
            <consortium name="NIH - Mammalian Gene Collection (MGC) project"/>
        </authorList>
    </citation>
    <scope>NUCLEOTIDE SEQUENCE [LARGE SCALE MRNA]</scope>
    <source>
        <strain>Hereford</strain>
        <tissue>Hippocampus</tissue>
    </source>
</reference>
<sequence>MSSRNNNKLPSNLPQLQNLIKRDPPAYVEEFLQQYNHYKSNVEIFKLQPNKPSKELAELVMFMAQISHCYPEHLSNFPQELKDLLSYNHTVLDPDLRMTFCKALILLRNKNLINPSSLLELFFELLRCHDKLLRKTLYTHIVTDIKNINAKHKNNKVNIVLQNFMYTMLRDSNATAAKISLDVMIELYRRNIWNDAKTVNVITTACFSKVTKILVAALTFFLGKDEEEKQDSDSESEDEGPTARDLLVQYATGKKSSKNKKKLEKAMKVLTKHKKKKKPEVFNFSAIHLIHDPQDFAEKLLKQLESSKERFEVKMMLMNLISRLVGIHELFLFNFYPFVQRFLQPHQREVTKILLFAAQASHHLVPPEIIQSLLMTVANNFVTDKNSGEVMTVGINAIKEITARCPLAMTEELLQDLAQYKTHKDKNVMMSARTLIQLFRTLNPQMLQKKFRGKPTEASIEARVQEYGELDAKDYIPGAEILEVENEEENAEGDEDGWESASLSDEADSDGEWVDVHHSSDEEQKEISEKLNSMPLEERKAKAAAVSTSRVLSQEDFQKIRMAQMRKELDAAPGKAQKRKYIEIDSDEERRGELLSLRDIERLHKKPKSDKETRLATAMAGKTDRKEFVRKKTKMNPFSSSTNKEKKKQKNFMMMRYSHNVRSKNKRSFREKQLALRDALLKKRKRMK</sequence>
<comment type="function">
    <text evidence="1">Required for 60S pre-ribosomal subunits export to the cytoplasm.</text>
</comment>
<comment type="subcellular location">
    <subcellularLocation>
        <location evidence="1">Nucleus</location>
        <location evidence="1">Nucleolus</location>
    </subcellularLocation>
</comment>
<comment type="similarity">
    <text evidence="5">Belongs to the SDA1 family.</text>
</comment>
<feature type="chain" id="PRO_0000328430" description="Protein SDA1 homolog">
    <location>
        <begin position="1"/>
        <end position="688"/>
    </location>
</feature>
<feature type="region of interest" description="Disordered" evidence="4">
    <location>
        <begin position="484"/>
        <end position="524"/>
    </location>
</feature>
<feature type="region of interest" description="Disordered" evidence="4">
    <location>
        <begin position="605"/>
        <end position="688"/>
    </location>
</feature>
<feature type="coiled-coil region" evidence="3">
    <location>
        <begin position="254"/>
        <end position="318"/>
    </location>
</feature>
<feature type="compositionally biased region" description="Acidic residues" evidence="4">
    <location>
        <begin position="484"/>
        <end position="498"/>
    </location>
</feature>
<feature type="compositionally biased region" description="Basic and acidic residues" evidence="4">
    <location>
        <begin position="514"/>
        <end position="524"/>
    </location>
</feature>
<feature type="compositionally biased region" description="Basic and acidic residues" evidence="4">
    <location>
        <begin position="668"/>
        <end position="681"/>
    </location>
</feature>
<feature type="modified residue" description="Phosphoserine" evidence="2">
    <location>
        <position position="232"/>
    </location>
</feature>
<feature type="modified residue" description="Phosphoserine" evidence="2">
    <location>
        <position position="234"/>
    </location>
</feature>
<feature type="modified residue" description="Phosphoserine" evidence="2">
    <location>
        <position position="236"/>
    </location>
</feature>
<feature type="modified residue" description="Phosphoserine" evidence="2">
    <location>
        <position position="586"/>
    </location>
</feature>
<feature type="modified residue" description="Phosphoserine" evidence="2">
    <location>
        <position position="596"/>
    </location>
</feature>
<evidence type="ECO:0000250" key="1"/>
<evidence type="ECO:0000250" key="2">
    <source>
        <dbReference type="UniProtKB" id="Q9NVU7"/>
    </source>
</evidence>
<evidence type="ECO:0000255" key="3"/>
<evidence type="ECO:0000256" key="4">
    <source>
        <dbReference type="SAM" id="MobiDB-lite"/>
    </source>
</evidence>
<evidence type="ECO:0000305" key="5"/>
<protein>
    <recommendedName>
        <fullName>Protein SDA1 homolog</fullName>
    </recommendedName>
    <alternativeName>
        <fullName>SDA1 domain-containing protein 1</fullName>
    </alternativeName>
</protein>
<proteinExistence type="evidence at transcript level"/>
<name>SDA1_BOVIN</name>
<organism>
    <name type="scientific">Bos taurus</name>
    <name type="common">Bovine</name>
    <dbReference type="NCBI Taxonomy" id="9913"/>
    <lineage>
        <taxon>Eukaryota</taxon>
        <taxon>Metazoa</taxon>
        <taxon>Chordata</taxon>
        <taxon>Craniata</taxon>
        <taxon>Vertebrata</taxon>
        <taxon>Euteleostomi</taxon>
        <taxon>Mammalia</taxon>
        <taxon>Eutheria</taxon>
        <taxon>Laurasiatheria</taxon>
        <taxon>Artiodactyla</taxon>
        <taxon>Ruminantia</taxon>
        <taxon>Pecora</taxon>
        <taxon>Bovidae</taxon>
        <taxon>Bovinae</taxon>
        <taxon>Bos</taxon>
    </lineage>
</organism>
<gene>
    <name type="primary">SDAD1</name>
</gene>
<dbReference type="EMBL" id="BC140502">
    <property type="protein sequence ID" value="AAI40503.1"/>
    <property type="molecule type" value="mRNA"/>
</dbReference>
<dbReference type="RefSeq" id="NP_001095959.1">
    <property type="nucleotide sequence ID" value="NM_001102489.1"/>
</dbReference>
<dbReference type="SMR" id="A5D7C2"/>
<dbReference type="FunCoup" id="A5D7C2">
    <property type="interactions" value="3435"/>
</dbReference>
<dbReference type="STRING" id="9913.ENSBTAP00000007240"/>
<dbReference type="PaxDb" id="9913-ENSBTAP00000007240"/>
<dbReference type="GeneID" id="507675"/>
<dbReference type="KEGG" id="bta:507675"/>
<dbReference type="CTD" id="55153"/>
<dbReference type="eggNOG" id="KOG2229">
    <property type="taxonomic scope" value="Eukaryota"/>
</dbReference>
<dbReference type="InParanoid" id="A5D7C2"/>
<dbReference type="OrthoDB" id="2196187at2759"/>
<dbReference type="Proteomes" id="UP000009136">
    <property type="component" value="Unplaced"/>
</dbReference>
<dbReference type="GO" id="GO:0005730">
    <property type="term" value="C:nucleolus"/>
    <property type="evidence" value="ECO:0000318"/>
    <property type="project" value="GO_Central"/>
</dbReference>
<dbReference type="GO" id="GO:0015031">
    <property type="term" value="P:protein transport"/>
    <property type="evidence" value="ECO:0007669"/>
    <property type="project" value="UniProtKB-KW"/>
</dbReference>
<dbReference type="GO" id="GO:0042273">
    <property type="term" value="P:ribosomal large subunit biogenesis"/>
    <property type="evidence" value="ECO:0000318"/>
    <property type="project" value="GO_Central"/>
</dbReference>
<dbReference type="GO" id="GO:0000055">
    <property type="term" value="P:ribosomal large subunit export from nucleus"/>
    <property type="evidence" value="ECO:0000318"/>
    <property type="project" value="GO_Central"/>
</dbReference>
<dbReference type="InterPro" id="IPR016024">
    <property type="entry name" value="ARM-type_fold"/>
</dbReference>
<dbReference type="InterPro" id="IPR027312">
    <property type="entry name" value="Sda1"/>
</dbReference>
<dbReference type="InterPro" id="IPR048292">
    <property type="entry name" value="SDA1_C"/>
</dbReference>
<dbReference type="InterPro" id="IPR007949">
    <property type="entry name" value="SDA1_MD"/>
</dbReference>
<dbReference type="InterPro" id="IPR012977">
    <property type="entry name" value="SDA1_N"/>
</dbReference>
<dbReference type="PANTHER" id="PTHR12730">
    <property type="entry name" value="HSDA/SDA1-RELATED"/>
    <property type="match status" value="1"/>
</dbReference>
<dbReference type="PANTHER" id="PTHR12730:SF0">
    <property type="entry name" value="PROTEIN SDA1 HOMOLOG"/>
    <property type="match status" value="1"/>
</dbReference>
<dbReference type="Pfam" id="PF21638">
    <property type="entry name" value="SDA1_C"/>
    <property type="match status" value="1"/>
</dbReference>
<dbReference type="Pfam" id="PF05285">
    <property type="entry name" value="SDA1_dom"/>
    <property type="match status" value="1"/>
</dbReference>
<dbReference type="Pfam" id="PF08158">
    <property type="entry name" value="SDA1_HEAT"/>
    <property type="match status" value="1"/>
</dbReference>
<dbReference type="SUPFAM" id="SSF48371">
    <property type="entry name" value="ARM repeat"/>
    <property type="match status" value="1"/>
</dbReference>
<keyword id="KW-0175">Coiled coil</keyword>
<keyword id="KW-0539">Nucleus</keyword>
<keyword id="KW-0597">Phosphoprotein</keyword>
<keyword id="KW-0653">Protein transport</keyword>
<keyword id="KW-1185">Reference proteome</keyword>
<keyword id="KW-0690">Ribosome biogenesis</keyword>
<keyword id="KW-0813">Transport</keyword>
<accession>A5D7C2</accession>